<comment type="function">
    <text evidence="2">Mediates abscisic acid (ABA) signal transduction through mitochondrial retrograde regulation involving ABI4 during seed germination and seedling growth, and leading to the production of reactive oxygen species (ROS) by the alternative respiratory pathway (PubMed:26163700). Required for the maintenance of mitochondrial structure (PubMed:26163700).</text>
</comment>
<comment type="subcellular location">
    <subcellularLocation>
        <location evidence="5">Mitochondrion membrane</location>
        <topology evidence="1">Single-pass membrane protein</topology>
    </subcellularLocation>
    <subcellularLocation>
        <location evidence="2">Mitochondrion</location>
    </subcellularLocation>
</comment>
<comment type="tissue specificity">
    <text evidence="2">Highly expressed in germinating seeds and developing seedlings (PubMed:26163700). Also present at low levels in seedlings, roots, leaves, stems and flowers, and barely in siliques (PubMed:26163700).</text>
</comment>
<comment type="disruption phenotype">
    <text evidence="2">Decreased abscisic acid (ABA) sensitivity during seed germination and seedling growth (PubMed:26163700). Abnormal mitochondria extensively internally vacuolated and characterized by a reduced ABA-stimulated reactive oxygen species (ROS) production associated with the inhibition of ABA-induced AOX1a and ABI4 gene expression (PubMed:26163700).</text>
</comment>
<comment type="similarity">
    <text evidence="4">Belongs to the RMD1/sif2 family.</text>
</comment>
<organism>
    <name type="scientific">Arabidopsis thaliana</name>
    <name type="common">Mouse-ear cress</name>
    <dbReference type="NCBI Taxonomy" id="3702"/>
    <lineage>
        <taxon>Eukaryota</taxon>
        <taxon>Viridiplantae</taxon>
        <taxon>Streptophyta</taxon>
        <taxon>Embryophyta</taxon>
        <taxon>Tracheophyta</taxon>
        <taxon>Spermatophyta</taxon>
        <taxon>Magnoliopsida</taxon>
        <taxon>eudicotyledons</taxon>
        <taxon>Gunneridae</taxon>
        <taxon>Pentapetalae</taxon>
        <taxon>rosids</taxon>
        <taxon>malvids</taxon>
        <taxon>Brassicales</taxon>
        <taxon>Brassicaceae</taxon>
        <taxon>Camelineae</taxon>
        <taxon>Arabidopsis</taxon>
    </lineage>
</organism>
<accession>Q9FNB2</accession>
<accession>Q8LCH7</accession>
<sequence>MMRSVDVYVKTLGPPVRSILYSIFTSQQKPSSLPSLPFHFSLRSSSNIPTRCFSNVVAKSNSPIYDFQGFRNLFTERAISSSTTTPVASAQPQQLQNQNQHPAEVDEEISMGLEDEAKLSIPVRAYFFSTSVDLRSLIEQNKQNFIPPTSRMTNYVVLKFGNHSDPTDTTRGRISGSESIYMVVFHYGSIVLFNVREHEVDEYLKVVERHASGLLPEMRKDEYEVRENPNLDTWMEVGRDFIRLQFLNTDGIRTIGCVLGQSIALDYYGRQVDGMVAEFTEINRQLEITGTFTMKRKKLFQLVGKANVILADVILKLGLFERSDIAWKDAKYGQIWEFLRDEFELTQSFANLDYKLKFVEHNVRFLQEILQNRKSATLEWLIIILISMEIAISFYNMSRASL</sequence>
<gene>
    <name evidence="3" type="primary">RRL</name>
    <name evidence="6" type="ordered locus">At5g13610</name>
    <name evidence="7" type="ORF">T6I14.13</name>
</gene>
<keyword id="KW-0938">Abscisic acid signaling pathway</keyword>
<keyword id="KW-0472">Membrane</keyword>
<keyword id="KW-0496">Mitochondrion</keyword>
<keyword id="KW-1185">Reference proteome</keyword>
<keyword id="KW-0812">Transmembrane</keyword>
<keyword id="KW-1133">Transmembrane helix</keyword>
<protein>
    <recommendedName>
        <fullName evidence="3">Protein RETARDED ROOT GROWTH-LIKE</fullName>
    </recommendedName>
</protein>
<feature type="chain" id="PRO_0000450307" description="Protein RETARDED ROOT GROWTH-LIKE">
    <location>
        <begin position="1"/>
        <end position="402"/>
    </location>
</feature>
<feature type="transmembrane region" description="Helical" evidence="1">
    <location>
        <begin position="375"/>
        <end position="395"/>
    </location>
</feature>
<feature type="sequence conflict" description="In Ref. 4; AAM63653." evidence="4" ref="4">
    <original>P</original>
    <variation>L</variation>
    <location>
        <position position="166"/>
    </location>
</feature>
<proteinExistence type="evidence at transcript level"/>
<name>RRL_ARATH</name>
<evidence type="ECO:0000255" key="1"/>
<evidence type="ECO:0000269" key="2">
    <source>
    </source>
</evidence>
<evidence type="ECO:0000303" key="3">
    <source>
    </source>
</evidence>
<evidence type="ECO:0000305" key="4"/>
<evidence type="ECO:0000305" key="5">
    <source>
    </source>
</evidence>
<evidence type="ECO:0000312" key="6">
    <source>
        <dbReference type="Araport" id="AT5G13610"/>
    </source>
</evidence>
<evidence type="ECO:0000312" key="7">
    <source>
        <dbReference type="EMBL" id="BAB08687.1"/>
    </source>
</evidence>
<dbReference type="EMBL" id="AB006704">
    <property type="protein sequence ID" value="BAB08687.1"/>
    <property type="molecule type" value="Genomic_DNA"/>
</dbReference>
<dbReference type="EMBL" id="CP002688">
    <property type="protein sequence ID" value="AED91917.1"/>
    <property type="molecule type" value="Genomic_DNA"/>
</dbReference>
<dbReference type="EMBL" id="AY127015">
    <property type="protein sequence ID" value="AAM83240.1"/>
    <property type="molecule type" value="mRNA"/>
</dbReference>
<dbReference type="EMBL" id="BT000617">
    <property type="protein sequence ID" value="AAN18184.1"/>
    <property type="molecule type" value="mRNA"/>
</dbReference>
<dbReference type="EMBL" id="AY086593">
    <property type="protein sequence ID" value="AAM63653.1"/>
    <property type="molecule type" value="mRNA"/>
</dbReference>
<dbReference type="RefSeq" id="NP_196865.1">
    <property type="nucleotide sequence ID" value="NM_121364.3"/>
</dbReference>
<dbReference type="SMR" id="Q9FNB2"/>
<dbReference type="FunCoup" id="Q9FNB2">
    <property type="interactions" value="555"/>
</dbReference>
<dbReference type="STRING" id="3702.Q9FNB2"/>
<dbReference type="iPTMnet" id="Q9FNB2"/>
<dbReference type="PaxDb" id="3702-AT5G13610.1"/>
<dbReference type="ProteomicsDB" id="185330"/>
<dbReference type="EnsemblPlants" id="AT5G13610.1">
    <property type="protein sequence ID" value="AT5G13610.1"/>
    <property type="gene ID" value="AT5G13610"/>
</dbReference>
<dbReference type="GeneID" id="831205"/>
<dbReference type="Gramene" id="AT5G13610.1">
    <property type="protein sequence ID" value="AT5G13610.1"/>
    <property type="gene ID" value="AT5G13610"/>
</dbReference>
<dbReference type="KEGG" id="ath:AT5G13610"/>
<dbReference type="Araport" id="AT5G13610"/>
<dbReference type="TAIR" id="AT5G13610">
    <property type="gene designation" value="RRL"/>
</dbReference>
<dbReference type="eggNOG" id="KOG2861">
    <property type="taxonomic scope" value="Eukaryota"/>
</dbReference>
<dbReference type="HOGENOM" id="CLU_011220_2_3_1"/>
<dbReference type="InParanoid" id="Q9FNB2"/>
<dbReference type="OMA" id="QNKPNFV"/>
<dbReference type="PhylomeDB" id="Q9FNB2"/>
<dbReference type="PRO" id="PR:Q9FNB2"/>
<dbReference type="Proteomes" id="UP000006548">
    <property type="component" value="Chromosome 5"/>
</dbReference>
<dbReference type="ExpressionAtlas" id="Q9FNB2">
    <property type="expression patterns" value="baseline and differential"/>
</dbReference>
<dbReference type="GO" id="GO:0031966">
    <property type="term" value="C:mitochondrial membrane"/>
    <property type="evidence" value="ECO:0007669"/>
    <property type="project" value="UniProtKB-SubCell"/>
</dbReference>
<dbReference type="GO" id="GO:0005739">
    <property type="term" value="C:mitochondrion"/>
    <property type="evidence" value="ECO:0000314"/>
    <property type="project" value="TAIR"/>
</dbReference>
<dbReference type="GO" id="GO:0009738">
    <property type="term" value="P:abscisic acid-activated signaling pathway"/>
    <property type="evidence" value="ECO:0000315"/>
    <property type="project" value="TAIR"/>
</dbReference>
<dbReference type="GO" id="GO:0031930">
    <property type="term" value="P:mitochondria-nucleus signaling pathway"/>
    <property type="evidence" value="ECO:0000315"/>
    <property type="project" value="TAIR"/>
</dbReference>
<dbReference type="GO" id="GO:0007005">
    <property type="term" value="P:mitochondrion organization"/>
    <property type="evidence" value="ECO:0000315"/>
    <property type="project" value="TAIR"/>
</dbReference>
<dbReference type="InterPro" id="IPR003734">
    <property type="entry name" value="DUF155"/>
</dbReference>
<dbReference type="InterPro" id="IPR051624">
    <property type="entry name" value="RMD1/Sad1-interacting"/>
</dbReference>
<dbReference type="PANTHER" id="PTHR16255:SF6">
    <property type="entry name" value="PROTEIN RETARDED ROOT GROWTH-LIKE"/>
    <property type="match status" value="1"/>
</dbReference>
<dbReference type="PANTHER" id="PTHR16255">
    <property type="entry name" value="REQUIRED FOR MEIOTIC NUCLEAR DIVISION PROTEIN 1 HOMOLOG"/>
    <property type="match status" value="1"/>
</dbReference>
<dbReference type="Pfam" id="PF02582">
    <property type="entry name" value="DUF155"/>
    <property type="match status" value="1"/>
</dbReference>
<reference key="1">
    <citation type="journal article" date="1997" name="DNA Res.">
        <title>Structural analysis of Arabidopsis thaliana chromosome 5. II. Sequence features of the regions of 1,044,062 bp covered by thirteen physically assigned P1 clones.</title>
        <authorList>
            <person name="Kotani H."/>
            <person name="Nakamura Y."/>
            <person name="Sato S."/>
            <person name="Kaneko T."/>
            <person name="Asamizu E."/>
            <person name="Miyajima N."/>
            <person name="Tabata S."/>
        </authorList>
    </citation>
    <scope>NUCLEOTIDE SEQUENCE [LARGE SCALE GENOMIC DNA]</scope>
    <source>
        <strain>cv. Columbia</strain>
    </source>
</reference>
<reference key="2">
    <citation type="journal article" date="2017" name="Plant J.">
        <title>Araport11: a complete reannotation of the Arabidopsis thaliana reference genome.</title>
        <authorList>
            <person name="Cheng C.Y."/>
            <person name="Krishnakumar V."/>
            <person name="Chan A.P."/>
            <person name="Thibaud-Nissen F."/>
            <person name="Schobel S."/>
            <person name="Town C.D."/>
        </authorList>
    </citation>
    <scope>GENOME REANNOTATION</scope>
    <source>
        <strain>cv. Columbia</strain>
    </source>
</reference>
<reference key="3">
    <citation type="journal article" date="2003" name="Science">
        <title>Empirical analysis of transcriptional activity in the Arabidopsis genome.</title>
        <authorList>
            <person name="Yamada K."/>
            <person name="Lim J."/>
            <person name="Dale J.M."/>
            <person name="Chen H."/>
            <person name="Shinn P."/>
            <person name="Palm C.J."/>
            <person name="Southwick A.M."/>
            <person name="Wu H.C."/>
            <person name="Kim C.J."/>
            <person name="Nguyen M."/>
            <person name="Pham P.K."/>
            <person name="Cheuk R.F."/>
            <person name="Karlin-Newmann G."/>
            <person name="Liu S.X."/>
            <person name="Lam B."/>
            <person name="Sakano H."/>
            <person name="Wu T."/>
            <person name="Yu G."/>
            <person name="Miranda M."/>
            <person name="Quach H.L."/>
            <person name="Tripp M."/>
            <person name="Chang C.H."/>
            <person name="Lee J.M."/>
            <person name="Toriumi M.J."/>
            <person name="Chan M.M."/>
            <person name="Tang C.C."/>
            <person name="Onodera C.S."/>
            <person name="Deng J.M."/>
            <person name="Akiyama K."/>
            <person name="Ansari Y."/>
            <person name="Arakawa T."/>
            <person name="Banh J."/>
            <person name="Banno F."/>
            <person name="Bowser L."/>
            <person name="Brooks S.Y."/>
            <person name="Carninci P."/>
            <person name="Chao Q."/>
            <person name="Choy N."/>
            <person name="Enju A."/>
            <person name="Goldsmith A.D."/>
            <person name="Gurjal M."/>
            <person name="Hansen N.F."/>
            <person name="Hayashizaki Y."/>
            <person name="Johnson-Hopson C."/>
            <person name="Hsuan V.W."/>
            <person name="Iida K."/>
            <person name="Karnes M."/>
            <person name="Khan S."/>
            <person name="Koesema E."/>
            <person name="Ishida J."/>
            <person name="Jiang P.X."/>
            <person name="Jones T."/>
            <person name="Kawai J."/>
            <person name="Kamiya A."/>
            <person name="Meyers C."/>
            <person name="Nakajima M."/>
            <person name="Narusaka M."/>
            <person name="Seki M."/>
            <person name="Sakurai T."/>
            <person name="Satou M."/>
            <person name="Tamse R."/>
            <person name="Vaysberg M."/>
            <person name="Wallender E.K."/>
            <person name="Wong C."/>
            <person name="Yamamura Y."/>
            <person name="Yuan S."/>
            <person name="Shinozaki K."/>
            <person name="Davis R.W."/>
            <person name="Theologis A."/>
            <person name="Ecker J.R."/>
        </authorList>
    </citation>
    <scope>NUCLEOTIDE SEQUENCE [LARGE SCALE MRNA]</scope>
    <source>
        <strain>cv. Columbia</strain>
    </source>
</reference>
<reference key="4">
    <citation type="submission" date="2002-03" db="EMBL/GenBank/DDBJ databases">
        <title>Full-length cDNA from Arabidopsis thaliana.</title>
        <authorList>
            <person name="Brover V.V."/>
            <person name="Troukhan M.E."/>
            <person name="Alexandrov N.A."/>
            <person name="Lu Y.-P."/>
            <person name="Flavell R.B."/>
            <person name="Feldmann K.A."/>
        </authorList>
    </citation>
    <scope>NUCLEOTIDE SEQUENCE [LARGE SCALE MRNA]</scope>
</reference>
<reference key="5">
    <citation type="journal article" date="2015" name="J. Exp. Bot.">
        <title>An Arabidopsis mitochondria-localized RRL protein mediates abscisic acid signal transduction through mitochondrial retrograde regulation involving ABI4.</title>
        <authorList>
            <person name="Yao X."/>
            <person name="Li J."/>
            <person name="Liu J."/>
            <person name="Liu K."/>
        </authorList>
    </citation>
    <scope>FUNCTION</scope>
    <scope>DISRUPTION PHENOTYPE</scope>
    <scope>TISSUE SPECIFICITY</scope>
    <scope>SUBCELLULAR LOCATION</scope>
    <source>
        <strain>cv. Columbia</strain>
    </source>
</reference>